<evidence type="ECO:0000255" key="1">
    <source>
        <dbReference type="HAMAP-Rule" id="MF_01396"/>
    </source>
</evidence>
<accession>Q4L7Y9</accession>
<feature type="chain" id="PRO_0000365924" description="ATP synthase subunit c">
    <location>
        <begin position="1"/>
        <end position="70"/>
    </location>
</feature>
<feature type="transmembrane region" description="Helical" evidence="1">
    <location>
        <begin position="4"/>
        <end position="24"/>
    </location>
</feature>
<feature type="transmembrane region" description="Helical" evidence="1">
    <location>
        <begin position="45"/>
        <end position="65"/>
    </location>
</feature>
<feature type="site" description="Reversibly protonated during proton transport" evidence="1">
    <location>
        <position position="54"/>
    </location>
</feature>
<keyword id="KW-0066">ATP synthesis</keyword>
<keyword id="KW-1003">Cell membrane</keyword>
<keyword id="KW-0138">CF(0)</keyword>
<keyword id="KW-0375">Hydrogen ion transport</keyword>
<keyword id="KW-0406">Ion transport</keyword>
<keyword id="KW-0446">Lipid-binding</keyword>
<keyword id="KW-0472">Membrane</keyword>
<keyword id="KW-0812">Transmembrane</keyword>
<keyword id="KW-1133">Transmembrane helix</keyword>
<keyword id="KW-0813">Transport</keyword>
<sequence length="70" mass="7080">MGLIAAAIAIGLSALGAGIGNGLIVSRTVEGVARQPEARGQLMSIMFIGIGLVEALPIIGVVIAFMTLFQ</sequence>
<comment type="function">
    <text evidence="1">F(1)F(0) ATP synthase produces ATP from ADP in the presence of a proton or sodium gradient. F-type ATPases consist of two structural domains, F(1) containing the extramembraneous catalytic core and F(0) containing the membrane proton channel, linked together by a central stalk and a peripheral stalk. During catalysis, ATP synthesis in the catalytic domain of F(1) is coupled via a rotary mechanism of the central stalk subunits to proton translocation.</text>
</comment>
<comment type="function">
    <text evidence="1">Key component of the F(0) channel; it plays a direct role in translocation across the membrane. A homomeric c-ring of between 10-14 subunits forms the central stalk rotor element with the F(1) delta and epsilon subunits.</text>
</comment>
<comment type="subunit">
    <text evidence="1">F-type ATPases have 2 components, F(1) - the catalytic core - and F(0) - the membrane proton channel. F(1) has five subunits: alpha(3), beta(3), gamma(1), delta(1), epsilon(1). F(0) has three main subunits: a(1), b(2) and c(10-14). The alpha and beta chains form an alternating ring which encloses part of the gamma chain. F(1) is attached to F(0) by a central stalk formed by the gamma and epsilon chains, while a peripheral stalk is formed by the delta and b chains.</text>
</comment>
<comment type="subcellular location">
    <subcellularLocation>
        <location evidence="1">Cell membrane</location>
        <topology evidence="1">Multi-pass membrane protein</topology>
    </subcellularLocation>
</comment>
<comment type="similarity">
    <text evidence="1">Belongs to the ATPase C chain family.</text>
</comment>
<gene>
    <name evidence="1" type="primary">atpE</name>
    <name type="ordered locus">SH0927</name>
</gene>
<dbReference type="EMBL" id="AP006716">
    <property type="protein sequence ID" value="BAE04236.1"/>
    <property type="molecule type" value="Genomic_DNA"/>
</dbReference>
<dbReference type="RefSeq" id="WP_011275238.1">
    <property type="nucleotide sequence ID" value="NC_007168.1"/>
</dbReference>
<dbReference type="SMR" id="Q4L7Y9"/>
<dbReference type="GeneID" id="93780315"/>
<dbReference type="KEGG" id="sha:SH0927"/>
<dbReference type="eggNOG" id="COG0636">
    <property type="taxonomic scope" value="Bacteria"/>
</dbReference>
<dbReference type="HOGENOM" id="CLU_148047_1_1_9"/>
<dbReference type="OrthoDB" id="2357540at2"/>
<dbReference type="Proteomes" id="UP000000543">
    <property type="component" value="Chromosome"/>
</dbReference>
<dbReference type="GO" id="GO:0005886">
    <property type="term" value="C:plasma membrane"/>
    <property type="evidence" value="ECO:0007669"/>
    <property type="project" value="UniProtKB-SubCell"/>
</dbReference>
<dbReference type="GO" id="GO:0045259">
    <property type="term" value="C:proton-transporting ATP synthase complex"/>
    <property type="evidence" value="ECO:0007669"/>
    <property type="project" value="UniProtKB-KW"/>
</dbReference>
<dbReference type="GO" id="GO:0033177">
    <property type="term" value="C:proton-transporting two-sector ATPase complex, proton-transporting domain"/>
    <property type="evidence" value="ECO:0007669"/>
    <property type="project" value="InterPro"/>
</dbReference>
<dbReference type="GO" id="GO:0008289">
    <property type="term" value="F:lipid binding"/>
    <property type="evidence" value="ECO:0007669"/>
    <property type="project" value="UniProtKB-KW"/>
</dbReference>
<dbReference type="GO" id="GO:0046933">
    <property type="term" value="F:proton-transporting ATP synthase activity, rotational mechanism"/>
    <property type="evidence" value="ECO:0007669"/>
    <property type="project" value="UniProtKB-UniRule"/>
</dbReference>
<dbReference type="CDD" id="cd18185">
    <property type="entry name" value="ATP-synt_Fo_c_ATPE"/>
    <property type="match status" value="1"/>
</dbReference>
<dbReference type="FunFam" id="1.20.20.10:FF:000004">
    <property type="entry name" value="ATP synthase subunit c"/>
    <property type="match status" value="1"/>
</dbReference>
<dbReference type="Gene3D" id="1.20.20.10">
    <property type="entry name" value="F1F0 ATP synthase subunit C"/>
    <property type="match status" value="1"/>
</dbReference>
<dbReference type="HAMAP" id="MF_01396">
    <property type="entry name" value="ATP_synth_c_bact"/>
    <property type="match status" value="1"/>
</dbReference>
<dbReference type="InterPro" id="IPR005953">
    <property type="entry name" value="ATP_synth_csu_bac/chlpt"/>
</dbReference>
<dbReference type="InterPro" id="IPR000454">
    <property type="entry name" value="ATP_synth_F0_csu"/>
</dbReference>
<dbReference type="InterPro" id="IPR020537">
    <property type="entry name" value="ATP_synth_F0_csu_DDCD_BS"/>
</dbReference>
<dbReference type="InterPro" id="IPR038662">
    <property type="entry name" value="ATP_synth_F0_csu_sf"/>
</dbReference>
<dbReference type="InterPro" id="IPR002379">
    <property type="entry name" value="ATPase_proteolipid_c-like_dom"/>
</dbReference>
<dbReference type="InterPro" id="IPR035921">
    <property type="entry name" value="F/V-ATP_Csub_sf"/>
</dbReference>
<dbReference type="NCBIfam" id="TIGR01260">
    <property type="entry name" value="ATP_synt_c"/>
    <property type="match status" value="1"/>
</dbReference>
<dbReference type="NCBIfam" id="NF005363">
    <property type="entry name" value="PRK06876.1"/>
    <property type="match status" value="1"/>
</dbReference>
<dbReference type="PANTHER" id="PTHR10031">
    <property type="entry name" value="ATP SYNTHASE LIPID-BINDING PROTEIN, MITOCHONDRIAL"/>
    <property type="match status" value="1"/>
</dbReference>
<dbReference type="PANTHER" id="PTHR10031:SF0">
    <property type="entry name" value="ATPASE PROTEIN 9"/>
    <property type="match status" value="1"/>
</dbReference>
<dbReference type="Pfam" id="PF00137">
    <property type="entry name" value="ATP-synt_C"/>
    <property type="match status" value="1"/>
</dbReference>
<dbReference type="PRINTS" id="PR00124">
    <property type="entry name" value="ATPASEC"/>
</dbReference>
<dbReference type="SUPFAM" id="SSF81333">
    <property type="entry name" value="F1F0 ATP synthase subunit C"/>
    <property type="match status" value="1"/>
</dbReference>
<dbReference type="PROSITE" id="PS00605">
    <property type="entry name" value="ATPASE_C"/>
    <property type="match status" value="1"/>
</dbReference>
<protein>
    <recommendedName>
        <fullName evidence="1">ATP synthase subunit c</fullName>
    </recommendedName>
    <alternativeName>
        <fullName evidence="1">ATP synthase F(0) sector subunit c</fullName>
    </alternativeName>
    <alternativeName>
        <fullName evidence="1">F-type ATPase subunit c</fullName>
        <shortName evidence="1">F-ATPase subunit c</shortName>
    </alternativeName>
    <alternativeName>
        <fullName evidence="1">Lipid-binding protein</fullName>
    </alternativeName>
</protein>
<proteinExistence type="inferred from homology"/>
<name>ATPL_STAHJ</name>
<organism>
    <name type="scientific">Staphylococcus haemolyticus (strain JCSC1435)</name>
    <dbReference type="NCBI Taxonomy" id="279808"/>
    <lineage>
        <taxon>Bacteria</taxon>
        <taxon>Bacillati</taxon>
        <taxon>Bacillota</taxon>
        <taxon>Bacilli</taxon>
        <taxon>Bacillales</taxon>
        <taxon>Staphylococcaceae</taxon>
        <taxon>Staphylococcus</taxon>
    </lineage>
</organism>
<reference key="1">
    <citation type="journal article" date="2005" name="J. Bacteriol.">
        <title>Whole-genome sequencing of Staphylococcus haemolyticus uncovers the extreme plasticity of its genome and the evolution of human-colonizing staphylococcal species.</title>
        <authorList>
            <person name="Takeuchi F."/>
            <person name="Watanabe S."/>
            <person name="Baba T."/>
            <person name="Yuzawa H."/>
            <person name="Ito T."/>
            <person name="Morimoto Y."/>
            <person name="Kuroda M."/>
            <person name="Cui L."/>
            <person name="Takahashi M."/>
            <person name="Ankai A."/>
            <person name="Baba S."/>
            <person name="Fukui S."/>
            <person name="Lee J.C."/>
            <person name="Hiramatsu K."/>
        </authorList>
    </citation>
    <scope>NUCLEOTIDE SEQUENCE [LARGE SCALE GENOMIC DNA]</scope>
    <source>
        <strain>JCSC1435</strain>
    </source>
</reference>